<name>RL34_SACD2</name>
<protein>
    <recommendedName>
        <fullName evidence="1">Large ribosomal subunit protein bL34</fullName>
    </recommendedName>
    <alternativeName>
        <fullName evidence="3">50S ribosomal protein L34</fullName>
    </alternativeName>
</protein>
<dbReference type="EMBL" id="CP000282">
    <property type="protein sequence ID" value="ABD83272.1"/>
    <property type="molecule type" value="Genomic_DNA"/>
</dbReference>
<dbReference type="RefSeq" id="WP_011470487.1">
    <property type="nucleotide sequence ID" value="NC_007912.1"/>
</dbReference>
<dbReference type="SMR" id="Q21DF7"/>
<dbReference type="STRING" id="203122.Sde_4017"/>
<dbReference type="GeneID" id="98615769"/>
<dbReference type="KEGG" id="sde:Sde_4017"/>
<dbReference type="eggNOG" id="COG0230">
    <property type="taxonomic scope" value="Bacteria"/>
</dbReference>
<dbReference type="HOGENOM" id="CLU_129938_2_0_6"/>
<dbReference type="OrthoDB" id="9804164at2"/>
<dbReference type="Proteomes" id="UP000001947">
    <property type="component" value="Chromosome"/>
</dbReference>
<dbReference type="GO" id="GO:1990904">
    <property type="term" value="C:ribonucleoprotein complex"/>
    <property type="evidence" value="ECO:0007669"/>
    <property type="project" value="UniProtKB-KW"/>
</dbReference>
<dbReference type="GO" id="GO:0005840">
    <property type="term" value="C:ribosome"/>
    <property type="evidence" value="ECO:0007669"/>
    <property type="project" value="UniProtKB-KW"/>
</dbReference>
<dbReference type="GO" id="GO:0003735">
    <property type="term" value="F:structural constituent of ribosome"/>
    <property type="evidence" value="ECO:0007669"/>
    <property type="project" value="InterPro"/>
</dbReference>
<dbReference type="GO" id="GO:0006412">
    <property type="term" value="P:translation"/>
    <property type="evidence" value="ECO:0007669"/>
    <property type="project" value="UniProtKB-UniRule"/>
</dbReference>
<dbReference type="FunFam" id="1.10.287.3980:FF:000001">
    <property type="entry name" value="Mitochondrial ribosomal protein L34"/>
    <property type="match status" value="1"/>
</dbReference>
<dbReference type="Gene3D" id="1.10.287.3980">
    <property type="match status" value="1"/>
</dbReference>
<dbReference type="HAMAP" id="MF_00391">
    <property type="entry name" value="Ribosomal_bL34"/>
    <property type="match status" value="1"/>
</dbReference>
<dbReference type="InterPro" id="IPR000271">
    <property type="entry name" value="Ribosomal_bL34"/>
</dbReference>
<dbReference type="InterPro" id="IPR020939">
    <property type="entry name" value="Ribosomal_bL34_CS"/>
</dbReference>
<dbReference type="NCBIfam" id="TIGR01030">
    <property type="entry name" value="rpmH_bact"/>
    <property type="match status" value="1"/>
</dbReference>
<dbReference type="PANTHER" id="PTHR14503:SF4">
    <property type="entry name" value="LARGE RIBOSOMAL SUBUNIT PROTEIN BL34M"/>
    <property type="match status" value="1"/>
</dbReference>
<dbReference type="PANTHER" id="PTHR14503">
    <property type="entry name" value="MITOCHONDRIAL RIBOSOMAL PROTEIN 34 FAMILY MEMBER"/>
    <property type="match status" value="1"/>
</dbReference>
<dbReference type="Pfam" id="PF00468">
    <property type="entry name" value="Ribosomal_L34"/>
    <property type="match status" value="1"/>
</dbReference>
<dbReference type="PROSITE" id="PS00784">
    <property type="entry name" value="RIBOSOMAL_L34"/>
    <property type="match status" value="1"/>
</dbReference>
<comment type="similarity">
    <text evidence="1">Belongs to the bacterial ribosomal protein bL34 family.</text>
</comment>
<keyword id="KW-1185">Reference proteome</keyword>
<keyword id="KW-0687">Ribonucleoprotein</keyword>
<keyword id="KW-0689">Ribosomal protein</keyword>
<proteinExistence type="inferred from homology"/>
<reference key="1">
    <citation type="journal article" date="2008" name="PLoS Genet.">
        <title>Complete genome sequence of the complex carbohydrate-degrading marine bacterium, Saccharophagus degradans strain 2-40 T.</title>
        <authorList>
            <person name="Weiner R.M."/>
            <person name="Taylor L.E. II"/>
            <person name="Henrissat B."/>
            <person name="Hauser L."/>
            <person name="Land M."/>
            <person name="Coutinho P.M."/>
            <person name="Rancurel C."/>
            <person name="Saunders E.H."/>
            <person name="Longmire A.G."/>
            <person name="Zhang H."/>
            <person name="Bayer E.A."/>
            <person name="Gilbert H.J."/>
            <person name="Larimer F."/>
            <person name="Zhulin I.B."/>
            <person name="Ekborg N.A."/>
            <person name="Lamed R."/>
            <person name="Richardson P.M."/>
            <person name="Borovok I."/>
            <person name="Hutcheson S."/>
        </authorList>
    </citation>
    <scope>NUCLEOTIDE SEQUENCE [LARGE SCALE GENOMIC DNA]</scope>
    <source>
        <strain>2-40 / ATCC 43961 / DSM 17024</strain>
    </source>
</reference>
<evidence type="ECO:0000255" key="1">
    <source>
        <dbReference type="HAMAP-Rule" id="MF_00391"/>
    </source>
</evidence>
<evidence type="ECO:0000256" key="2">
    <source>
        <dbReference type="SAM" id="MobiDB-lite"/>
    </source>
</evidence>
<evidence type="ECO:0000305" key="3"/>
<accession>Q21DF7</accession>
<organism>
    <name type="scientific">Saccharophagus degradans (strain 2-40 / ATCC 43961 / DSM 17024)</name>
    <dbReference type="NCBI Taxonomy" id="203122"/>
    <lineage>
        <taxon>Bacteria</taxon>
        <taxon>Pseudomonadati</taxon>
        <taxon>Pseudomonadota</taxon>
        <taxon>Gammaproteobacteria</taxon>
        <taxon>Cellvibrionales</taxon>
        <taxon>Cellvibrionaceae</taxon>
        <taxon>Saccharophagus</taxon>
    </lineage>
</organism>
<sequence>MKRTFQPSVLKRKRTHGFRARMATANGRKVLSRRRAKGRARLSA</sequence>
<feature type="chain" id="PRO_1000013435" description="Large ribosomal subunit protein bL34">
    <location>
        <begin position="1"/>
        <end position="44"/>
    </location>
</feature>
<feature type="region of interest" description="Disordered" evidence="2">
    <location>
        <begin position="1"/>
        <end position="44"/>
    </location>
</feature>
<feature type="compositionally biased region" description="Basic residues" evidence="2">
    <location>
        <begin position="10"/>
        <end position="19"/>
    </location>
</feature>
<feature type="compositionally biased region" description="Basic residues" evidence="2">
    <location>
        <begin position="30"/>
        <end position="44"/>
    </location>
</feature>
<gene>
    <name evidence="1" type="primary">rpmH</name>
    <name type="ordered locus">Sde_4017</name>
</gene>